<reference key="1">
    <citation type="journal article" date="2004" name="Nature">
        <title>Genome evolution in yeasts.</title>
        <authorList>
            <person name="Dujon B."/>
            <person name="Sherman D."/>
            <person name="Fischer G."/>
            <person name="Durrens P."/>
            <person name="Casaregola S."/>
            <person name="Lafontaine I."/>
            <person name="de Montigny J."/>
            <person name="Marck C."/>
            <person name="Neuveglise C."/>
            <person name="Talla E."/>
            <person name="Goffard N."/>
            <person name="Frangeul L."/>
            <person name="Aigle M."/>
            <person name="Anthouard V."/>
            <person name="Babour A."/>
            <person name="Barbe V."/>
            <person name="Barnay S."/>
            <person name="Blanchin S."/>
            <person name="Beckerich J.-M."/>
            <person name="Beyne E."/>
            <person name="Bleykasten C."/>
            <person name="Boisrame A."/>
            <person name="Boyer J."/>
            <person name="Cattolico L."/>
            <person name="Confanioleri F."/>
            <person name="de Daruvar A."/>
            <person name="Despons L."/>
            <person name="Fabre E."/>
            <person name="Fairhead C."/>
            <person name="Ferry-Dumazet H."/>
            <person name="Groppi A."/>
            <person name="Hantraye F."/>
            <person name="Hennequin C."/>
            <person name="Jauniaux N."/>
            <person name="Joyet P."/>
            <person name="Kachouri R."/>
            <person name="Kerrest A."/>
            <person name="Koszul R."/>
            <person name="Lemaire M."/>
            <person name="Lesur I."/>
            <person name="Ma L."/>
            <person name="Muller H."/>
            <person name="Nicaud J.-M."/>
            <person name="Nikolski M."/>
            <person name="Oztas S."/>
            <person name="Ozier-Kalogeropoulos O."/>
            <person name="Pellenz S."/>
            <person name="Potier S."/>
            <person name="Richard G.-F."/>
            <person name="Straub M.-L."/>
            <person name="Suleau A."/>
            <person name="Swennen D."/>
            <person name="Tekaia F."/>
            <person name="Wesolowski-Louvel M."/>
            <person name="Westhof E."/>
            <person name="Wirth B."/>
            <person name="Zeniou-Meyer M."/>
            <person name="Zivanovic Y."/>
            <person name="Bolotin-Fukuhara M."/>
            <person name="Thierry A."/>
            <person name="Bouchier C."/>
            <person name="Caudron B."/>
            <person name="Scarpelli C."/>
            <person name="Gaillardin C."/>
            <person name="Weissenbach J."/>
            <person name="Wincker P."/>
            <person name="Souciet J.-L."/>
        </authorList>
    </citation>
    <scope>NUCLEOTIDE SEQUENCE [LARGE SCALE GENOMIC DNA]</scope>
    <source>
        <strain>ATCC 36239 / CBS 767 / BCRC 21394 / JCM 1990 / NBRC 0083 / IGC 2968</strain>
    </source>
</reference>
<keyword id="KW-0472">Membrane</keyword>
<keyword id="KW-0496">Mitochondrion</keyword>
<keyword id="KW-0999">Mitochondrion inner membrane</keyword>
<keyword id="KW-0653">Protein transport</keyword>
<keyword id="KW-1185">Reference proteome</keyword>
<keyword id="KW-0811">Translocation</keyword>
<keyword id="KW-0812">Transmembrane</keyword>
<keyword id="KW-1133">Transmembrane helix</keyword>
<keyword id="KW-0813">Transport</keyword>
<comment type="function">
    <text evidence="1">Essential component of the TIM22 complex, a complex that mediates the import and insertion of multi-pass transmembrane proteins into the mitochondrial inner membrane. The TIM22 complex forms a twin-pore translocase that uses the membrane potential as external driving force (By similarity).</text>
</comment>
<comment type="subunit">
    <text evidence="1">Component of the TIM22 complex, whose core is composed of TIM22 and TIM54, associated with the 70 kDa heterohexamer composed of TIM9 and TIM10 (or TIM8 and TIM13).</text>
</comment>
<comment type="subcellular location">
    <subcellularLocation>
        <location evidence="1">Mitochondrion inner membrane</location>
        <topology evidence="1">Single-pass membrane protein</topology>
    </subcellularLocation>
</comment>
<comment type="similarity">
    <text evidence="4">Belongs to the TIM54 family.</text>
</comment>
<gene>
    <name type="primary">TIM54</name>
    <name type="ordered locus">DEHA2C17226g</name>
</gene>
<sequence length="495" mass="56353">MSENPEPSKGSTPNVEGAEKVNKPPVKKGWSNPALRMMGIPKISLPSRNWMIFWTLLASVGGGVAYDRYQQKQIRKKWMEKFEPLGEEAYRTDRIPRKLSVFIAPPPNDYLDSSMVYFRKYVKPLLNASAIDFDVFTENRQGDIRAAVAERIRELRIETNENAKKAQEEAKQEQYDASWTKFFKKDVPNFFTLKFQSNSKEDEALVSSNDLYSPKDVLGLYYLKEPIDAKRDDELNPMEAGGVICIGRGAYKEYMTGVHEGLLGPLEAPEEVRTITEVDPQVTENEPETAHNDNESKAVVELPVLPTDDLPADSVDKQDAVPETPSETAENTPNAEEGDNEKPVPKPFITPDEYPNATYAPEFQNVSLIMNKKNVPVIFEQPVYVFPLPIVSGFLNTHRKLYRFFTKRNVADDYGCRTSVVVQNVSRPFVYKDQFMAKEEELEWPKKWVATGKEKNSEWVQELVTDDRVTTRMKVFDVSLAAKSTDKPIDKPTNE</sequence>
<proteinExistence type="inferred from homology"/>
<accession>Q6BTN1</accession>
<protein>
    <recommendedName>
        <fullName>Mitochondrial import inner membrane translocase subunit TIM54</fullName>
    </recommendedName>
</protein>
<organism>
    <name type="scientific">Debaryomyces hansenii (strain ATCC 36239 / CBS 767 / BCRC 21394 / JCM 1990 / NBRC 0083 / IGC 2968)</name>
    <name type="common">Yeast</name>
    <name type="synonym">Torulaspora hansenii</name>
    <dbReference type="NCBI Taxonomy" id="284592"/>
    <lineage>
        <taxon>Eukaryota</taxon>
        <taxon>Fungi</taxon>
        <taxon>Dikarya</taxon>
        <taxon>Ascomycota</taxon>
        <taxon>Saccharomycotina</taxon>
        <taxon>Pichiomycetes</taxon>
        <taxon>Debaryomycetaceae</taxon>
        <taxon>Debaryomyces</taxon>
    </lineage>
</organism>
<name>TIM54_DEBHA</name>
<evidence type="ECO:0000250" key="1"/>
<evidence type="ECO:0000255" key="2"/>
<evidence type="ECO:0000256" key="3">
    <source>
        <dbReference type="SAM" id="MobiDB-lite"/>
    </source>
</evidence>
<evidence type="ECO:0000305" key="4"/>
<dbReference type="EMBL" id="CR382135">
    <property type="protein sequence ID" value="CAG86520.2"/>
    <property type="molecule type" value="Genomic_DNA"/>
</dbReference>
<dbReference type="RefSeq" id="XP_458438.2">
    <property type="nucleotide sequence ID" value="XM_458438.1"/>
</dbReference>
<dbReference type="SMR" id="Q6BTN1"/>
<dbReference type="FunCoup" id="Q6BTN1">
    <property type="interactions" value="25"/>
</dbReference>
<dbReference type="STRING" id="284592.Q6BTN1"/>
<dbReference type="GeneID" id="2900467"/>
<dbReference type="KEGG" id="dha:DEHA2C17226g"/>
<dbReference type="VEuPathDB" id="FungiDB:DEHA2C17226g"/>
<dbReference type="eggNOG" id="ENOG502QPMQ">
    <property type="taxonomic scope" value="Eukaryota"/>
</dbReference>
<dbReference type="HOGENOM" id="CLU_039097_0_0_1"/>
<dbReference type="InParanoid" id="Q6BTN1"/>
<dbReference type="OMA" id="RNWMIFF"/>
<dbReference type="OrthoDB" id="5598305at2759"/>
<dbReference type="Proteomes" id="UP000000599">
    <property type="component" value="Chromosome C"/>
</dbReference>
<dbReference type="GO" id="GO:0005743">
    <property type="term" value="C:mitochondrial inner membrane"/>
    <property type="evidence" value="ECO:0007669"/>
    <property type="project" value="UniProtKB-SubCell"/>
</dbReference>
<dbReference type="GO" id="GO:0015031">
    <property type="term" value="P:protein transport"/>
    <property type="evidence" value="ECO:0007669"/>
    <property type="project" value="UniProtKB-KW"/>
</dbReference>
<dbReference type="InterPro" id="IPR050187">
    <property type="entry name" value="Lipid_Phosphate_FormReg"/>
</dbReference>
<dbReference type="InterPro" id="IPR021056">
    <property type="entry name" value="Mt_import_IM_translocase_Tim54"/>
</dbReference>
<dbReference type="PANTHER" id="PTHR12358:SF101">
    <property type="entry name" value="MITOCHONDRIAL IMPORT INNER MEMBRANE TRANSLOCASE SUBUNIT TIM54"/>
    <property type="match status" value="1"/>
</dbReference>
<dbReference type="PANTHER" id="PTHR12358">
    <property type="entry name" value="SPHINGOSINE KINASE"/>
    <property type="match status" value="1"/>
</dbReference>
<dbReference type="Pfam" id="PF11711">
    <property type="entry name" value="Tim54"/>
    <property type="match status" value="1"/>
</dbReference>
<feature type="chain" id="PRO_0000228015" description="Mitochondrial import inner membrane translocase subunit TIM54">
    <location>
        <begin position="1"/>
        <end position="495"/>
    </location>
</feature>
<feature type="topological domain" description="Mitochondrial matrix" evidence="2">
    <location>
        <begin position="1"/>
        <end position="49"/>
    </location>
</feature>
<feature type="transmembrane region" description="Helical" evidence="2">
    <location>
        <begin position="50"/>
        <end position="66"/>
    </location>
</feature>
<feature type="topological domain" description="Mitochondrial intermembrane" evidence="2">
    <location>
        <begin position="67"/>
        <end position="495"/>
    </location>
</feature>
<feature type="region of interest" description="Disordered" evidence="3">
    <location>
        <begin position="1"/>
        <end position="27"/>
    </location>
</feature>
<feature type="region of interest" description="Disordered" evidence="3">
    <location>
        <begin position="280"/>
        <end position="299"/>
    </location>
</feature>
<feature type="region of interest" description="Disordered" evidence="3">
    <location>
        <begin position="307"/>
        <end position="355"/>
    </location>
</feature>
<feature type="compositionally biased region" description="Polar residues" evidence="3">
    <location>
        <begin position="1"/>
        <end position="14"/>
    </location>
</feature>
<feature type="compositionally biased region" description="Basic and acidic residues" evidence="3">
    <location>
        <begin position="288"/>
        <end position="298"/>
    </location>
</feature>
<feature type="compositionally biased region" description="Polar residues" evidence="3">
    <location>
        <begin position="325"/>
        <end position="334"/>
    </location>
</feature>